<comment type="function">
    <text evidence="1">DNA-dependent RNA polymerase catalyzes the transcription of DNA into RNA using the four ribonucleoside triphosphates as substrates.</text>
</comment>
<comment type="catalytic activity">
    <reaction evidence="1">
        <text>RNA(n) + a ribonucleoside 5'-triphosphate = RNA(n+1) + diphosphate</text>
        <dbReference type="Rhea" id="RHEA:21248"/>
        <dbReference type="Rhea" id="RHEA-COMP:14527"/>
        <dbReference type="Rhea" id="RHEA-COMP:17342"/>
        <dbReference type="ChEBI" id="CHEBI:33019"/>
        <dbReference type="ChEBI" id="CHEBI:61557"/>
        <dbReference type="ChEBI" id="CHEBI:140395"/>
        <dbReference type="EC" id="2.7.7.6"/>
    </reaction>
</comment>
<comment type="subunit">
    <text evidence="1">In cyanobacteria the RNAP catalytic core is composed of 2 alpha, 1 beta, 1 beta', 1 gamma and 1 omega subunit. When a sigma factor is associated with the core the holoenzyme is formed, which can initiate transcription.</text>
</comment>
<comment type="similarity">
    <text evidence="1">Belongs to the RNA polymerase beta chain family.</text>
</comment>
<organism>
    <name type="scientific">Synechococcus sp. (strain WH7803)</name>
    <dbReference type="NCBI Taxonomy" id="32051"/>
    <lineage>
        <taxon>Bacteria</taxon>
        <taxon>Bacillati</taxon>
        <taxon>Cyanobacteriota</taxon>
        <taxon>Cyanophyceae</taxon>
        <taxon>Synechococcales</taxon>
        <taxon>Synechococcaceae</taxon>
        <taxon>Synechococcus</taxon>
    </lineage>
</organism>
<sequence length="1097" mass="122582">MSSSAIQVAKTATYLPDLVEVQRASFKWFLEKGLIEELESFSPITDYTGKLELHFVGSEYRLKRPRHDVEEAKRRDATFASQMYVTCRLVNKETGEIKEQEVFIGELPLMTERGTFIINGAERVIVNQIVRSPGVYFKDEQDKNGRRTYNASVIPNRGAWLKFETDKNDLLHVRVDKTRKINAHVLMRAMGLSDNDVIDKLRHPEYYKKSIEAANDEGISSEDQALLELYKKLRPGEPPSVSGGQQLLQTRFFDPKRYDLGRVGRYKINKKLRLTIPDSVRTLTHEDVLSTLDYLINLELDVGGASLDDIDHLGNRRVRSVGELLQNQVRVGLNRLERIIKERMTVGETDSLTPAQLVNPKPLVAAIKEFFGSSQLSQFMDQTNPLAELTHKRRISALGPGGLTRERAGFAVRDIHPSHYGRLCPIETPEGPNAGLINSLATHARVNEYGFIETPFWKVENGRVLKQGDPIYLSADLEDECRVAPGDVATDSDGAILADLIPVRYRQDFEKVPPEQVDYVQLSPVQVISVATSLIPFLEHDDANRALMGSNMQRQAVPLLRPERPLVGTGLETQVARDSGMVPISRVNGTVTFVDATAIVVRDEEGVDHSHYLQKYQRSNQDTCLNQRPIVRQGDPVIVGQVLADGSACEGGEIALGQNVLIAYMPWEGYNYEDAILVSERLVNDDLYTSVHIEKYEIEARQTKLGPEEITREIPNVAEESLGNLDEMGIIRIGAFVESGDILVGKVTPKGESDQPPEEKLLRAIFGEKARDVRDNSLRVPSTERGRVVDVRIYTREQGDELPPGANMVVRVYVAQRRKIQVGDKMAGRHGNKGIISRILPREDMPYLPDGTPVDIVLNPLGVPSRMNVGQVFELLMGWAAANLDCRVKVVPFDEMYGAEKSQQTVETFLKEAAKQPGKEWIYNPDDPGKLQLIDGRSGEPFDQPVAVGYSHFLKLVHLVDDKIHARSTGPYSLVTQQPLGGKAQQGGQRLGEMEVWALEAYGAAYTLQELLTVKSDDMQGRNEALNAIVKGKPIPRPGTPESFKVLMRELQSLGLDIAVFTDEGKEVDLMQDVNPRRSTPSRPTYESLGVADYDED</sequence>
<keyword id="KW-0240">DNA-directed RNA polymerase</keyword>
<keyword id="KW-0548">Nucleotidyltransferase</keyword>
<keyword id="KW-1185">Reference proteome</keyword>
<keyword id="KW-0804">Transcription</keyword>
<keyword id="KW-0808">Transferase</keyword>
<proteinExistence type="inferred from homology"/>
<feature type="chain" id="PRO_0000300419" description="DNA-directed RNA polymerase subunit beta">
    <location>
        <begin position="1"/>
        <end position="1097"/>
    </location>
</feature>
<feature type="region of interest" description="Disordered" evidence="2">
    <location>
        <begin position="1072"/>
        <end position="1097"/>
    </location>
</feature>
<accession>A5GNH3</accession>
<name>RPOB_SYNPW</name>
<gene>
    <name evidence="1" type="primary">rpoB</name>
    <name type="ordered locus">SynWH7803_2062</name>
</gene>
<dbReference type="EC" id="2.7.7.6" evidence="1"/>
<dbReference type="EMBL" id="CT971583">
    <property type="protein sequence ID" value="CAK24488.1"/>
    <property type="molecule type" value="Genomic_DNA"/>
</dbReference>
<dbReference type="SMR" id="A5GNH3"/>
<dbReference type="STRING" id="32051.SynWH7803_2062"/>
<dbReference type="KEGG" id="syx:SynWH7803_2062"/>
<dbReference type="eggNOG" id="COG0085">
    <property type="taxonomic scope" value="Bacteria"/>
</dbReference>
<dbReference type="HOGENOM" id="CLU_000524_4_1_3"/>
<dbReference type="OrthoDB" id="9803954at2"/>
<dbReference type="Proteomes" id="UP000001566">
    <property type="component" value="Chromosome"/>
</dbReference>
<dbReference type="GO" id="GO:0000428">
    <property type="term" value="C:DNA-directed RNA polymerase complex"/>
    <property type="evidence" value="ECO:0007669"/>
    <property type="project" value="UniProtKB-KW"/>
</dbReference>
<dbReference type="GO" id="GO:0003677">
    <property type="term" value="F:DNA binding"/>
    <property type="evidence" value="ECO:0007669"/>
    <property type="project" value="UniProtKB-UniRule"/>
</dbReference>
<dbReference type="GO" id="GO:0003899">
    <property type="term" value="F:DNA-directed RNA polymerase activity"/>
    <property type="evidence" value="ECO:0007669"/>
    <property type="project" value="UniProtKB-UniRule"/>
</dbReference>
<dbReference type="GO" id="GO:0032549">
    <property type="term" value="F:ribonucleoside binding"/>
    <property type="evidence" value="ECO:0007669"/>
    <property type="project" value="InterPro"/>
</dbReference>
<dbReference type="GO" id="GO:0006351">
    <property type="term" value="P:DNA-templated transcription"/>
    <property type="evidence" value="ECO:0007669"/>
    <property type="project" value="UniProtKB-UniRule"/>
</dbReference>
<dbReference type="CDD" id="cd00653">
    <property type="entry name" value="RNA_pol_B_RPB2"/>
    <property type="match status" value="1"/>
</dbReference>
<dbReference type="FunFam" id="3.90.1800.10:FF:000001">
    <property type="entry name" value="DNA-directed RNA polymerase subunit beta"/>
    <property type="match status" value="1"/>
</dbReference>
<dbReference type="Gene3D" id="2.40.50.100">
    <property type="match status" value="1"/>
</dbReference>
<dbReference type="Gene3D" id="2.40.50.150">
    <property type="match status" value="1"/>
</dbReference>
<dbReference type="Gene3D" id="3.90.1100.10">
    <property type="match status" value="1"/>
</dbReference>
<dbReference type="Gene3D" id="2.30.150.10">
    <property type="entry name" value="DNA-directed RNA polymerase, beta subunit, external 1 domain"/>
    <property type="match status" value="1"/>
</dbReference>
<dbReference type="Gene3D" id="2.40.270.10">
    <property type="entry name" value="DNA-directed RNA polymerase, subunit 2, domain 6"/>
    <property type="match status" value="1"/>
</dbReference>
<dbReference type="Gene3D" id="3.90.1800.10">
    <property type="entry name" value="RNA polymerase alpha subunit dimerisation domain"/>
    <property type="match status" value="1"/>
</dbReference>
<dbReference type="Gene3D" id="3.90.1110.10">
    <property type="entry name" value="RNA polymerase Rpb2, domain 2"/>
    <property type="match status" value="1"/>
</dbReference>
<dbReference type="HAMAP" id="MF_01321">
    <property type="entry name" value="RNApol_bact_RpoB"/>
    <property type="match status" value="1"/>
</dbReference>
<dbReference type="InterPro" id="IPR042107">
    <property type="entry name" value="DNA-dir_RNA_pol_bsu_ext_1_sf"/>
</dbReference>
<dbReference type="InterPro" id="IPR019462">
    <property type="entry name" value="DNA-dir_RNA_pol_bsu_external_1"/>
</dbReference>
<dbReference type="InterPro" id="IPR015712">
    <property type="entry name" value="DNA-dir_RNA_pol_su2"/>
</dbReference>
<dbReference type="InterPro" id="IPR007120">
    <property type="entry name" value="DNA-dir_RNAP_su2_dom"/>
</dbReference>
<dbReference type="InterPro" id="IPR037033">
    <property type="entry name" value="DNA-dir_RNAP_su2_hyb_sf"/>
</dbReference>
<dbReference type="InterPro" id="IPR010243">
    <property type="entry name" value="RNA_pol_bsu_bac"/>
</dbReference>
<dbReference type="InterPro" id="IPR007121">
    <property type="entry name" value="RNA_pol_bsu_CS"/>
</dbReference>
<dbReference type="InterPro" id="IPR007644">
    <property type="entry name" value="RNA_pol_bsu_protrusion"/>
</dbReference>
<dbReference type="InterPro" id="IPR007642">
    <property type="entry name" value="RNA_pol_Rpb2_2"/>
</dbReference>
<dbReference type="InterPro" id="IPR037034">
    <property type="entry name" value="RNA_pol_Rpb2_2_sf"/>
</dbReference>
<dbReference type="InterPro" id="IPR007645">
    <property type="entry name" value="RNA_pol_Rpb2_3"/>
</dbReference>
<dbReference type="InterPro" id="IPR007641">
    <property type="entry name" value="RNA_pol_Rpb2_7"/>
</dbReference>
<dbReference type="InterPro" id="IPR014724">
    <property type="entry name" value="RNA_pol_RPB2_OB-fold"/>
</dbReference>
<dbReference type="NCBIfam" id="NF001616">
    <property type="entry name" value="PRK00405.1"/>
    <property type="match status" value="1"/>
</dbReference>
<dbReference type="NCBIfam" id="TIGR02013">
    <property type="entry name" value="rpoB"/>
    <property type="match status" value="1"/>
</dbReference>
<dbReference type="PANTHER" id="PTHR20856">
    <property type="entry name" value="DNA-DIRECTED RNA POLYMERASE I SUBUNIT 2"/>
    <property type="match status" value="1"/>
</dbReference>
<dbReference type="Pfam" id="PF04563">
    <property type="entry name" value="RNA_pol_Rpb2_1"/>
    <property type="match status" value="1"/>
</dbReference>
<dbReference type="Pfam" id="PF04561">
    <property type="entry name" value="RNA_pol_Rpb2_2"/>
    <property type="match status" value="1"/>
</dbReference>
<dbReference type="Pfam" id="PF04565">
    <property type="entry name" value="RNA_pol_Rpb2_3"/>
    <property type="match status" value="1"/>
</dbReference>
<dbReference type="Pfam" id="PF10385">
    <property type="entry name" value="RNA_pol_Rpb2_45"/>
    <property type="match status" value="1"/>
</dbReference>
<dbReference type="Pfam" id="PF00562">
    <property type="entry name" value="RNA_pol_Rpb2_6"/>
    <property type="match status" value="1"/>
</dbReference>
<dbReference type="Pfam" id="PF04560">
    <property type="entry name" value="RNA_pol_Rpb2_7"/>
    <property type="match status" value="1"/>
</dbReference>
<dbReference type="SUPFAM" id="SSF64484">
    <property type="entry name" value="beta and beta-prime subunits of DNA dependent RNA-polymerase"/>
    <property type="match status" value="1"/>
</dbReference>
<dbReference type="PROSITE" id="PS01166">
    <property type="entry name" value="RNA_POL_BETA"/>
    <property type="match status" value="1"/>
</dbReference>
<reference key="1">
    <citation type="submission" date="2006-05" db="EMBL/GenBank/DDBJ databases">
        <authorList>
            <consortium name="Genoscope"/>
        </authorList>
    </citation>
    <scope>NUCLEOTIDE SEQUENCE [LARGE SCALE GENOMIC DNA]</scope>
    <source>
        <strain>WH7803</strain>
    </source>
</reference>
<evidence type="ECO:0000255" key="1">
    <source>
        <dbReference type="HAMAP-Rule" id="MF_01321"/>
    </source>
</evidence>
<evidence type="ECO:0000256" key="2">
    <source>
        <dbReference type="SAM" id="MobiDB-lite"/>
    </source>
</evidence>
<protein>
    <recommendedName>
        <fullName evidence="1">DNA-directed RNA polymerase subunit beta</fullName>
        <shortName evidence="1">RNAP subunit beta</shortName>
        <ecNumber evidence="1">2.7.7.6</ecNumber>
    </recommendedName>
    <alternativeName>
        <fullName evidence="1">RNA polymerase subunit beta</fullName>
    </alternativeName>
    <alternativeName>
        <fullName evidence="1">Transcriptase subunit beta</fullName>
    </alternativeName>
</protein>